<feature type="signal peptide" evidence="2">
    <location>
        <begin position="1"/>
        <end position="20"/>
    </location>
</feature>
<feature type="propeptide" id="PRO_0000393650" evidence="2">
    <location>
        <begin position="21"/>
        <end position="25"/>
    </location>
</feature>
<feature type="chain" id="PRO_0000393651" description="Probable endopolygalacturonase B">
    <location>
        <begin position="26"/>
        <end position="362"/>
    </location>
</feature>
<feature type="repeat" description="PbH1 1">
    <location>
        <begin position="155"/>
        <end position="184"/>
    </location>
</feature>
<feature type="repeat" description="PbH1 2">
    <location>
        <begin position="185"/>
        <end position="206"/>
    </location>
</feature>
<feature type="repeat" description="PbH1 3">
    <location>
        <begin position="207"/>
        <end position="227"/>
    </location>
</feature>
<feature type="repeat" description="PbH1 4">
    <location>
        <begin position="236"/>
        <end position="257"/>
    </location>
</feature>
<feature type="repeat" description="PbH1 5">
    <location>
        <begin position="265"/>
        <end position="287"/>
    </location>
</feature>
<feature type="repeat" description="PbH1 6">
    <location>
        <begin position="299"/>
        <end position="344"/>
    </location>
</feature>
<feature type="active site" description="Proton donor" evidence="3">
    <location>
        <position position="199"/>
    </location>
</feature>
<feature type="active site" evidence="3">
    <location>
        <position position="221"/>
    </location>
</feature>
<feature type="glycosylation site" description="N-linked (GlcNAc...) asparagine" evidence="2">
    <location>
        <position position="334"/>
    </location>
</feature>
<feature type="disulfide bond" evidence="1">
    <location>
        <begin position="28"/>
        <end position="43"/>
    </location>
</feature>
<feature type="disulfide bond" evidence="1">
    <location>
        <begin position="201"/>
        <end position="217"/>
    </location>
</feature>
<feature type="disulfide bond" evidence="1">
    <location>
        <begin position="327"/>
        <end position="332"/>
    </location>
</feature>
<feature type="disulfide bond" evidence="1">
    <location>
        <begin position="351"/>
        <end position="360"/>
    </location>
</feature>
<evidence type="ECO:0000250" key="1"/>
<evidence type="ECO:0000255" key="2"/>
<evidence type="ECO:0000255" key="3">
    <source>
        <dbReference type="PROSITE-ProRule" id="PRU10052"/>
    </source>
</evidence>
<evidence type="ECO:0000305" key="4"/>
<reference key="1">
    <citation type="submission" date="2005-05" db="EMBL/GenBank/DDBJ databases">
        <title>Polygalacturonase of Aspergillus kawachii.</title>
        <authorList>
            <person name="Kishida M."/>
        </authorList>
    </citation>
    <scope>NUCLEOTIDE SEQUENCE [GENOMIC DNA]</scope>
</reference>
<name>PGLRB_ASPKA</name>
<proteinExistence type="inferred from homology"/>
<comment type="function">
    <text evidence="1">Involved in maceration and soft-rotting of plant tissue. Hydrolyzes the 1,4-alpha glycosidic bonds of de-esterified pectate in the smooth region of the plant cell wall (By similarity).</text>
</comment>
<comment type="catalytic activity">
    <reaction>
        <text>(1,4-alpha-D-galacturonosyl)n+m + H2O = (1,4-alpha-D-galacturonosyl)n + (1,4-alpha-D-galacturonosyl)m.</text>
        <dbReference type="EC" id="3.2.1.15"/>
    </reaction>
</comment>
<comment type="subcellular location">
    <subcellularLocation>
        <location evidence="1">Secreted</location>
    </subcellularLocation>
</comment>
<comment type="similarity">
    <text evidence="4">Belongs to the glycosyl hydrolase 28 family.</text>
</comment>
<dbReference type="EC" id="3.2.1.15"/>
<dbReference type="EMBL" id="AB214906">
    <property type="protein sequence ID" value="BAE94655.1"/>
    <property type="molecule type" value="Genomic_DNA"/>
</dbReference>
<dbReference type="SMR" id="Q1HAY5"/>
<dbReference type="CAZy" id="GH28">
    <property type="family name" value="Glycoside Hydrolase Family 28"/>
</dbReference>
<dbReference type="GlyCosmos" id="Q1HAY5">
    <property type="glycosylation" value="1 site, No reported glycans"/>
</dbReference>
<dbReference type="VEuPathDB" id="FungiDB:AKAW_00337"/>
<dbReference type="GO" id="GO:0005576">
    <property type="term" value="C:extracellular region"/>
    <property type="evidence" value="ECO:0000250"/>
    <property type="project" value="UniProtKB"/>
</dbReference>
<dbReference type="GO" id="GO:0004650">
    <property type="term" value="F:polygalacturonase activity"/>
    <property type="evidence" value="ECO:0000250"/>
    <property type="project" value="UniProtKB"/>
</dbReference>
<dbReference type="GO" id="GO:0071555">
    <property type="term" value="P:cell wall organization"/>
    <property type="evidence" value="ECO:0007669"/>
    <property type="project" value="UniProtKB-KW"/>
</dbReference>
<dbReference type="GO" id="GO:0045490">
    <property type="term" value="P:pectin catabolic process"/>
    <property type="evidence" value="ECO:0000250"/>
    <property type="project" value="UniProtKB"/>
</dbReference>
<dbReference type="FunFam" id="2.160.20.10:FF:000002">
    <property type="entry name" value="Endopolygalacturonase D"/>
    <property type="match status" value="1"/>
</dbReference>
<dbReference type="Gene3D" id="2.160.20.10">
    <property type="entry name" value="Single-stranded right-handed beta-helix, Pectin lyase-like"/>
    <property type="match status" value="1"/>
</dbReference>
<dbReference type="InterPro" id="IPR000743">
    <property type="entry name" value="Glyco_hydro_28"/>
</dbReference>
<dbReference type="InterPro" id="IPR050434">
    <property type="entry name" value="Glycosyl_hydrlase_28"/>
</dbReference>
<dbReference type="InterPro" id="IPR006626">
    <property type="entry name" value="PbH1"/>
</dbReference>
<dbReference type="InterPro" id="IPR012334">
    <property type="entry name" value="Pectin_lyas_fold"/>
</dbReference>
<dbReference type="InterPro" id="IPR011050">
    <property type="entry name" value="Pectin_lyase_fold/virulence"/>
</dbReference>
<dbReference type="PANTHER" id="PTHR31884:SF13">
    <property type="entry name" value="ENDOPOLYGALACTURONASE B"/>
    <property type="match status" value="1"/>
</dbReference>
<dbReference type="PANTHER" id="PTHR31884">
    <property type="entry name" value="POLYGALACTURONASE"/>
    <property type="match status" value="1"/>
</dbReference>
<dbReference type="Pfam" id="PF00295">
    <property type="entry name" value="Glyco_hydro_28"/>
    <property type="match status" value="1"/>
</dbReference>
<dbReference type="SMART" id="SM00710">
    <property type="entry name" value="PbH1"/>
    <property type="match status" value="6"/>
</dbReference>
<dbReference type="SUPFAM" id="SSF51126">
    <property type="entry name" value="Pectin lyase-like"/>
    <property type="match status" value="1"/>
</dbReference>
<dbReference type="PROSITE" id="PS00502">
    <property type="entry name" value="POLYGALACTURONASE"/>
    <property type="match status" value="1"/>
</dbReference>
<gene>
    <name type="primary">pgaB</name>
    <name type="synonym">pecB</name>
</gene>
<sequence length="362" mass="37986">MHFLQNAFVAATMGAAPAAATPLEKRSCTFTSASAAKSGKSSCSTITFDNIAVPAGETLDLTGLKKGTTVIFEGETTFGYKEWKGPLISMSGTDITVKQASGAKINCDGARWWDGKGSNGGKTKPKFFQAHKLDESSITGLKIYNTPVQGFSILADHLTITDVTIDDSAGTSKGHNTDAFDIGQSTYITIDGATVYNQDDCLAINSGEHITFTNGYCDGGHGLSIGSIGGRSDNTVNDVTISNSKVVNSQNGVRIKTIYGKTGTVENVKFEDITLSDISKYGIVVEQDYENGSPTGTPTNGVKVEDITFKKVTGSVKSSGTDIYILCGSGRCSNWTWSGVDVTGGKKSSKCKNVPSGASCSD</sequence>
<keyword id="KW-0961">Cell wall biogenesis/degradation</keyword>
<keyword id="KW-1015">Disulfide bond</keyword>
<keyword id="KW-0325">Glycoprotein</keyword>
<keyword id="KW-0326">Glycosidase</keyword>
<keyword id="KW-0378">Hydrolase</keyword>
<keyword id="KW-0677">Repeat</keyword>
<keyword id="KW-0964">Secreted</keyword>
<keyword id="KW-0732">Signal</keyword>
<keyword id="KW-0865">Zymogen</keyword>
<protein>
    <recommendedName>
        <fullName>Probable endopolygalacturonase B</fullName>
        <ecNumber>3.2.1.15</ecNumber>
    </recommendedName>
    <alternativeName>
        <fullName>Pectinase B</fullName>
    </alternativeName>
    <alternativeName>
        <fullName>Polygalacturonase B</fullName>
    </alternativeName>
</protein>
<accession>Q1HAY5</accession>
<organism>
    <name type="scientific">Aspergillus kawachii</name>
    <name type="common">White koji mold</name>
    <name type="synonym">Aspergillus awamori var. kawachi</name>
    <dbReference type="NCBI Taxonomy" id="1069201"/>
    <lineage>
        <taxon>Eukaryota</taxon>
        <taxon>Fungi</taxon>
        <taxon>Dikarya</taxon>
        <taxon>Ascomycota</taxon>
        <taxon>Pezizomycotina</taxon>
        <taxon>Eurotiomycetes</taxon>
        <taxon>Eurotiomycetidae</taxon>
        <taxon>Eurotiales</taxon>
        <taxon>Aspergillaceae</taxon>
        <taxon>Aspergillus</taxon>
        <taxon>Aspergillus subgen. Circumdati</taxon>
    </lineage>
</organism>